<organism>
    <name type="scientific">Saccharomyces cerevisiae (strain ATCC 204508 / S288c)</name>
    <name type="common">Baker's yeast</name>
    <dbReference type="NCBI Taxonomy" id="559292"/>
    <lineage>
        <taxon>Eukaryota</taxon>
        <taxon>Fungi</taxon>
        <taxon>Dikarya</taxon>
        <taxon>Ascomycota</taxon>
        <taxon>Saccharomycotina</taxon>
        <taxon>Saccharomycetes</taxon>
        <taxon>Saccharomycetales</taxon>
        <taxon>Saccharomycetaceae</taxon>
        <taxon>Saccharomyces</taxon>
    </lineage>
</organism>
<accession>P52960</accession>
<accession>D6W358</accession>
<comment type="function">
    <text evidence="3 5 6 7">The PIP2-OAF1 heterodimer acts as a transcriptional activator to induce the transcription of genes encoding proteins involved in fatty acid beta-oxidation, a response called oleic acid induction, when cells grow on fatty acids as sole carbon source. Recognizes and binds to the oleate response element (ORE) (or peroxisome box), two inverted CGG triplets spaced by 14 to 18 intervening nucleotides, in the promoter region of a number of genes (such as CTA1, FOX1 to FOX3, FAA2, PAS8, PAS10, etc.) for peroxisomal proteins. Activity is inhibited by OAF1 under non-inducing conditions. Activity is repressed by glucose.</text>
</comment>
<comment type="subunit">
    <text>Heterodimer of PIP2 and OAF1.</text>
</comment>
<comment type="subcellular location">
    <subcellularLocation>
        <location>Nucleus</location>
    </subcellularLocation>
</comment>
<comment type="induction">
    <text evidence="6 7">Autoregulated. Induced upon growth on fatty acids.</text>
</comment>
<comment type="domain">
    <text evidence="4">The 9aaTAD motif (residues 985 to 993) is a transactivation domain present in a large number of yeast and animal transcription factors.</text>
</comment>
<feature type="chain" id="PRO_0000114964" description="Peroxisome proliferation transcriptional regulator">
    <location>
        <begin position="1"/>
        <end position="996"/>
    </location>
</feature>
<feature type="DNA-binding region" description="Zn(2)-C6 fungal-type" evidence="1">
    <location>
        <begin position="25"/>
        <end position="52"/>
    </location>
</feature>
<feature type="region of interest" description="Disordered" evidence="2">
    <location>
        <begin position="879"/>
        <end position="929"/>
    </location>
</feature>
<feature type="short sequence motif" description="9aaTAD">
    <location>
        <begin position="985"/>
        <end position="993"/>
    </location>
</feature>
<feature type="compositionally biased region" description="Polar residues" evidence="2">
    <location>
        <begin position="879"/>
        <end position="928"/>
    </location>
</feature>
<name>PIP2_YEAST</name>
<evidence type="ECO:0000255" key="1">
    <source>
        <dbReference type="PROSITE-ProRule" id="PRU00227"/>
    </source>
</evidence>
<evidence type="ECO:0000256" key="2">
    <source>
        <dbReference type="SAM" id="MobiDB-lite"/>
    </source>
</evidence>
<evidence type="ECO:0000269" key="3">
    <source>
    </source>
</evidence>
<evidence type="ECO:0000269" key="4">
    <source>
    </source>
</evidence>
<evidence type="ECO:0000269" key="5">
    <source>
    </source>
</evidence>
<evidence type="ECO:0000269" key="6">
    <source>
    </source>
</evidence>
<evidence type="ECO:0000269" key="7">
    <source>
    </source>
</evidence>
<keyword id="KW-0010">Activator</keyword>
<keyword id="KW-0238">DNA-binding</keyword>
<keyword id="KW-0479">Metal-binding</keyword>
<keyword id="KW-0539">Nucleus</keyword>
<keyword id="KW-1185">Reference proteome</keyword>
<keyword id="KW-0804">Transcription</keyword>
<keyword id="KW-0805">Transcription regulation</keyword>
<keyword id="KW-0862">Zinc</keyword>
<reference key="1">
    <citation type="journal article" date="1996" name="EMBO J.">
        <title>Pip2p: a transcriptional regulator of peroxisome proliferation in the yeast Saccharomyces cerevisiae.</title>
        <authorList>
            <person name="Rottensteiner H."/>
            <person name="Kal A.J."/>
            <person name="Filipits M."/>
            <person name="Binder M."/>
            <person name="Hamilton B."/>
            <person name="Tabak H.F."/>
            <person name="Ruis H."/>
        </authorList>
    </citation>
    <scope>NUCLEOTIDE SEQUENCE [GENOMIC DNA]</scope>
    <scope>FUNCTION</scope>
    <scope>DNA-BINDING</scope>
</reference>
<reference key="2">
    <citation type="journal article" date="1997" name="Nature">
        <title>The nucleotide sequence of Saccharomyces cerevisiae chromosome XV.</title>
        <authorList>
            <person name="Dujon B."/>
            <person name="Albermann K."/>
            <person name="Aldea M."/>
            <person name="Alexandraki D."/>
            <person name="Ansorge W."/>
            <person name="Arino J."/>
            <person name="Benes V."/>
            <person name="Bohn C."/>
            <person name="Bolotin-Fukuhara M."/>
            <person name="Bordonne R."/>
            <person name="Boyer J."/>
            <person name="Camasses A."/>
            <person name="Casamayor A."/>
            <person name="Casas C."/>
            <person name="Cheret G."/>
            <person name="Cziepluch C."/>
            <person name="Daignan-Fornier B."/>
            <person name="Dang V.-D."/>
            <person name="de Haan M."/>
            <person name="Delius H."/>
            <person name="Durand P."/>
            <person name="Fairhead C."/>
            <person name="Feldmann H."/>
            <person name="Gaillon L."/>
            <person name="Galisson F."/>
            <person name="Gamo F.-J."/>
            <person name="Gancedo C."/>
            <person name="Goffeau A."/>
            <person name="Goulding S.E."/>
            <person name="Grivell L.A."/>
            <person name="Habbig B."/>
            <person name="Hand N.J."/>
            <person name="Hani J."/>
            <person name="Hattenhorst U."/>
            <person name="Hebling U."/>
            <person name="Hernando Y."/>
            <person name="Herrero E."/>
            <person name="Heumann K."/>
            <person name="Hiesel R."/>
            <person name="Hilger F."/>
            <person name="Hofmann B."/>
            <person name="Hollenberg C.P."/>
            <person name="Hughes B."/>
            <person name="Jauniaux J.-C."/>
            <person name="Kalogeropoulos A."/>
            <person name="Katsoulou C."/>
            <person name="Kordes E."/>
            <person name="Lafuente M.J."/>
            <person name="Landt O."/>
            <person name="Louis E.J."/>
            <person name="Maarse A.C."/>
            <person name="Madania A."/>
            <person name="Mannhaupt G."/>
            <person name="Marck C."/>
            <person name="Martin R.P."/>
            <person name="Mewes H.-W."/>
            <person name="Michaux G."/>
            <person name="Paces V."/>
            <person name="Parle-McDermott A.G."/>
            <person name="Pearson B.M."/>
            <person name="Perrin A."/>
            <person name="Pettersson B."/>
            <person name="Poch O."/>
            <person name="Pohl T.M."/>
            <person name="Poirey R."/>
            <person name="Portetelle D."/>
            <person name="Pujol A."/>
            <person name="Purnelle B."/>
            <person name="Ramezani Rad M."/>
            <person name="Rechmann S."/>
            <person name="Schwager C."/>
            <person name="Schweizer M."/>
            <person name="Sor F."/>
            <person name="Sterky F."/>
            <person name="Tarassov I.A."/>
            <person name="Teodoru C."/>
            <person name="Tettelin H."/>
            <person name="Thierry A."/>
            <person name="Tobiasch E."/>
            <person name="Tzermia M."/>
            <person name="Uhlen M."/>
            <person name="Unseld M."/>
            <person name="Valens M."/>
            <person name="Vandenbol M."/>
            <person name="Vetter I."/>
            <person name="Vlcek C."/>
            <person name="Voet M."/>
            <person name="Volckaert G."/>
            <person name="Voss H."/>
            <person name="Wambutt R."/>
            <person name="Wedler H."/>
            <person name="Wiemann S."/>
            <person name="Winsor B."/>
            <person name="Wolfe K.H."/>
            <person name="Zollner A."/>
            <person name="Zumstein E."/>
            <person name="Kleine K."/>
        </authorList>
    </citation>
    <scope>NUCLEOTIDE SEQUENCE [LARGE SCALE GENOMIC DNA]</scope>
    <source>
        <strain>ATCC 204508 / S288c</strain>
    </source>
</reference>
<reference key="3">
    <citation type="journal article" date="2014" name="G3 (Bethesda)">
        <title>The reference genome sequence of Saccharomyces cerevisiae: Then and now.</title>
        <authorList>
            <person name="Engel S.R."/>
            <person name="Dietrich F.S."/>
            <person name="Fisk D.G."/>
            <person name="Binkley G."/>
            <person name="Balakrishnan R."/>
            <person name="Costanzo M.C."/>
            <person name="Dwight S.S."/>
            <person name="Hitz B.C."/>
            <person name="Karra K."/>
            <person name="Nash R.S."/>
            <person name="Weng S."/>
            <person name="Wong E.D."/>
            <person name="Lloyd P."/>
            <person name="Skrzypek M.S."/>
            <person name="Miyasato S.R."/>
            <person name="Simison M."/>
            <person name="Cherry J.M."/>
        </authorList>
    </citation>
    <scope>GENOME REANNOTATION</scope>
    <source>
        <strain>ATCC 204508 / S288c</strain>
    </source>
</reference>
<reference key="4">
    <citation type="journal article" date="1997" name="Eur. J. Biochem.">
        <title>A heterodimer of the Zn2Cys6 transcription factors Pip2p and Oaf1p controls induction of genes encoding peroxisomal proteins in Saccharomyces cerevisiae.</title>
        <authorList>
            <person name="Rottensteiner H."/>
            <person name="Kal A.J."/>
            <person name="Hamilton B."/>
            <person name="Ruis H."/>
            <person name="Tabak H.F."/>
        </authorList>
    </citation>
    <scope>FUNCTION</scope>
    <scope>DNA-BINDING</scope>
    <scope>INTERACTION WITH OAF1</scope>
    <scope>INDUCTION</scope>
</reference>
<reference key="5">
    <citation type="journal article" date="1997" name="Mol. Cell. Biol.">
        <title>A complex containing two transcription factors regulates peroxisome proliferation and the coordinate induction of beta-oxidation enzymes in Saccharomyces cerevisiae.</title>
        <authorList>
            <person name="Karpichev I.V."/>
            <person name="Luo Y."/>
            <person name="Marians R.C."/>
            <person name="Small G.M."/>
        </authorList>
    </citation>
    <scope>FUNCTION</scope>
    <scope>INTERACTION WITH OAF1</scope>
    <scope>INDUCTION</scope>
</reference>
<reference key="6">
    <citation type="journal article" date="1999" name="J. Biol. Chem.">
        <title>Functional analysis of the Zn(2)Cys(6) transcription factors Oaf1p and Pip2p. Different roles in fatty acid induction of beta-oxidation in Saccharomyces cerevisiae.</title>
        <authorList>
            <person name="Baumgartner U."/>
            <person name="Hamilton B."/>
            <person name="Piskacek M."/>
            <person name="Ruis H."/>
            <person name="Rottensteiner H."/>
        </authorList>
    </citation>
    <scope>FUNCTION</scope>
</reference>
<reference key="7">
    <citation type="journal article" date="2003" name="Eur. J. Biochem.">
        <title>Saccharomyces cerevisiae Pip2p-Oaf1p regulates PEX25 transcription through an adenine-less ORE.</title>
        <authorList>
            <person name="Rottensteiner H."/>
            <person name="Hartig A."/>
            <person name="Hamilton B."/>
            <person name="Ruis H."/>
            <person name="Erdmann R."/>
            <person name="Gurvitz A."/>
        </authorList>
    </citation>
    <scope>DNA-BINDING</scope>
</reference>
<reference key="8">
    <citation type="journal article" date="2007" name="Genomics">
        <title>Nine-amino-acid transactivation domain: establishment and prediction utilities.</title>
        <authorList>
            <person name="Piskacek S."/>
            <person name="Gregor M."/>
            <person name="Nemethova M."/>
            <person name="Grabner M."/>
            <person name="Kovarik P."/>
            <person name="Piskacek M."/>
        </authorList>
    </citation>
    <scope>DOMAIN</scope>
</reference>
<gene>
    <name type="primary">PIP2</name>
    <name type="synonym">OAF2</name>
    <name type="ordered locus">YOR363C</name>
</gene>
<dbReference type="EMBL" id="X91991">
    <property type="protein sequence ID" value="CAA63046.1"/>
    <property type="molecule type" value="Genomic_DNA"/>
</dbReference>
<dbReference type="EMBL" id="Z75271">
    <property type="protein sequence ID" value="CAA99692.1"/>
    <property type="molecule type" value="Genomic_DNA"/>
</dbReference>
<dbReference type="EMBL" id="BK006948">
    <property type="protein sequence ID" value="DAA11124.1"/>
    <property type="molecule type" value="Genomic_DNA"/>
</dbReference>
<dbReference type="PIR" id="S70646">
    <property type="entry name" value="S70646"/>
</dbReference>
<dbReference type="RefSeq" id="NP_015008.3">
    <property type="nucleotide sequence ID" value="NM_001183783.3"/>
</dbReference>
<dbReference type="BioGRID" id="34748">
    <property type="interactions" value="53"/>
</dbReference>
<dbReference type="ComplexPortal" id="CPX-1038">
    <property type="entry name" value="PIP2-OAF1 transcription factor complex"/>
</dbReference>
<dbReference type="DIP" id="DIP-1013N"/>
<dbReference type="FunCoup" id="P52960">
    <property type="interactions" value="1375"/>
</dbReference>
<dbReference type="IntAct" id="P52960">
    <property type="interactions" value="1"/>
</dbReference>
<dbReference type="MINT" id="P52960"/>
<dbReference type="STRING" id="4932.YOR363C"/>
<dbReference type="iPTMnet" id="P52960"/>
<dbReference type="PaxDb" id="4932-YOR363C"/>
<dbReference type="PeptideAtlas" id="P52960"/>
<dbReference type="EnsemblFungi" id="YOR363C_mRNA">
    <property type="protein sequence ID" value="YOR363C"/>
    <property type="gene ID" value="YOR363C"/>
</dbReference>
<dbReference type="GeneID" id="854545"/>
<dbReference type="KEGG" id="sce:YOR363C"/>
<dbReference type="AGR" id="SGD:S000005890"/>
<dbReference type="SGD" id="S000005890">
    <property type="gene designation" value="PIP2"/>
</dbReference>
<dbReference type="VEuPathDB" id="FungiDB:YOR363C"/>
<dbReference type="eggNOG" id="ENOG502QW20">
    <property type="taxonomic scope" value="Eukaryota"/>
</dbReference>
<dbReference type="GeneTree" id="ENSGT00940000176335"/>
<dbReference type="HOGENOM" id="CLU_008453_0_0_1"/>
<dbReference type="InParanoid" id="P52960"/>
<dbReference type="OMA" id="HGPFTWH"/>
<dbReference type="OrthoDB" id="5069333at2759"/>
<dbReference type="BioCyc" id="YEAST:G3O-33833-MONOMER"/>
<dbReference type="BioGRID-ORCS" id="854545">
    <property type="hits" value="2 hits in 10 CRISPR screens"/>
</dbReference>
<dbReference type="PRO" id="PR:P52960"/>
<dbReference type="Proteomes" id="UP000002311">
    <property type="component" value="Chromosome XV"/>
</dbReference>
<dbReference type="RNAct" id="P52960">
    <property type="molecule type" value="protein"/>
</dbReference>
<dbReference type="GO" id="GO:0005634">
    <property type="term" value="C:nucleus"/>
    <property type="evidence" value="ECO:0000314"/>
    <property type="project" value="ComplexPortal"/>
</dbReference>
<dbReference type="GO" id="GO:0089716">
    <property type="term" value="C:Pip2-Oaf1 complex"/>
    <property type="evidence" value="ECO:0000314"/>
    <property type="project" value="SGD"/>
</dbReference>
<dbReference type="GO" id="GO:0005667">
    <property type="term" value="C:transcription regulator complex"/>
    <property type="evidence" value="ECO:0000353"/>
    <property type="project" value="ComplexPortal"/>
</dbReference>
<dbReference type="GO" id="GO:0003677">
    <property type="term" value="F:DNA binding"/>
    <property type="evidence" value="ECO:0007669"/>
    <property type="project" value="UniProtKB-KW"/>
</dbReference>
<dbReference type="GO" id="GO:0001228">
    <property type="term" value="F:DNA-binding transcription activator activity, RNA polymerase II-specific"/>
    <property type="evidence" value="ECO:0000315"/>
    <property type="project" value="SGD"/>
</dbReference>
<dbReference type="GO" id="GO:0000981">
    <property type="term" value="F:DNA-binding transcription factor activity, RNA polymerase II-specific"/>
    <property type="evidence" value="ECO:0000318"/>
    <property type="project" value="GO_Central"/>
</dbReference>
<dbReference type="GO" id="GO:0008270">
    <property type="term" value="F:zinc ion binding"/>
    <property type="evidence" value="ECO:0007669"/>
    <property type="project" value="InterPro"/>
</dbReference>
<dbReference type="GO" id="GO:0071400">
    <property type="term" value="P:cellular response to oleic acid"/>
    <property type="evidence" value="ECO:0000315"/>
    <property type="project" value="SGD"/>
</dbReference>
<dbReference type="GO" id="GO:0006631">
    <property type="term" value="P:fatty acid metabolic process"/>
    <property type="evidence" value="ECO:0000314"/>
    <property type="project" value="ComplexPortal"/>
</dbReference>
<dbReference type="GO" id="GO:0007031">
    <property type="term" value="P:peroxisome organization"/>
    <property type="evidence" value="ECO:0000303"/>
    <property type="project" value="ComplexPortal"/>
</dbReference>
<dbReference type="GO" id="GO:0032000">
    <property type="term" value="P:positive regulation of fatty acid beta-oxidation"/>
    <property type="evidence" value="ECO:0000315"/>
    <property type="project" value="SGD"/>
</dbReference>
<dbReference type="GO" id="GO:0045944">
    <property type="term" value="P:positive regulation of transcription by RNA polymerase II"/>
    <property type="evidence" value="ECO:0000315"/>
    <property type="project" value="SGD"/>
</dbReference>
<dbReference type="GO" id="GO:0006355">
    <property type="term" value="P:regulation of DNA-templated transcription"/>
    <property type="evidence" value="ECO:0000314"/>
    <property type="project" value="ComplexPortal"/>
</dbReference>
<dbReference type="CDD" id="cd12148">
    <property type="entry name" value="fungal_TF_MHR"/>
    <property type="match status" value="1"/>
</dbReference>
<dbReference type="CDD" id="cd00067">
    <property type="entry name" value="GAL4"/>
    <property type="match status" value="1"/>
</dbReference>
<dbReference type="Gene3D" id="4.10.240.10">
    <property type="entry name" value="Zn(2)-C6 fungal-type DNA-binding domain"/>
    <property type="match status" value="1"/>
</dbReference>
<dbReference type="InterPro" id="IPR050675">
    <property type="entry name" value="OAF3"/>
</dbReference>
<dbReference type="InterPro" id="IPR036864">
    <property type="entry name" value="Zn2-C6_fun-type_DNA-bd_sf"/>
</dbReference>
<dbReference type="InterPro" id="IPR001138">
    <property type="entry name" value="Zn2Cys6_DnaBD"/>
</dbReference>
<dbReference type="PANTHER" id="PTHR31069">
    <property type="entry name" value="OLEATE-ACTIVATED TRANSCRIPTION FACTOR 1-RELATED"/>
    <property type="match status" value="1"/>
</dbReference>
<dbReference type="PANTHER" id="PTHR31069:SF29">
    <property type="entry name" value="OLEATE-ACTIVATED TRANSCRIPTION FACTOR 1-RELATED"/>
    <property type="match status" value="1"/>
</dbReference>
<dbReference type="Pfam" id="PF00172">
    <property type="entry name" value="Zn_clus"/>
    <property type="match status" value="1"/>
</dbReference>
<dbReference type="PRINTS" id="PR00755">
    <property type="entry name" value="AFLATOXINBRP"/>
</dbReference>
<dbReference type="SMART" id="SM00066">
    <property type="entry name" value="GAL4"/>
    <property type="match status" value="1"/>
</dbReference>
<dbReference type="SUPFAM" id="SSF57701">
    <property type="entry name" value="Zn2/Cys6 DNA-binding domain"/>
    <property type="match status" value="1"/>
</dbReference>
<dbReference type="PROSITE" id="PS00463">
    <property type="entry name" value="ZN2_CY6_FUNGAL_1"/>
    <property type="match status" value="1"/>
</dbReference>
<dbReference type="PROSITE" id="PS50048">
    <property type="entry name" value="ZN2_CY6_FUNGAL_2"/>
    <property type="match status" value="1"/>
</dbReference>
<sequence>MYFTDESSPAMNRVGKKRNRLSFVCQACRKAKTKCDQEKPRCGRCTKQNLFCIYDVARQAAPRNPNKDATIARLKKEIRYWRNKTVDLTQEKKDFYTALKRPTEELAARRTCKSLQENSFPISLYKTHPRLIMTKVMKREINPLSEKYLIFQDTFLKTLIASVLLSCSRNSMIPALNADISRSRTQPCVKNNVVKMREVLLKNSKYESQRKSINEFTDRLLQRKNPEEQIAVNKVISLLYSNRESSYLEDTCPTENDYSDLLKGYINEIEKTLPPKAIIEQYLSHFFEHIFHLIPFASKEMLEESIHTTVQYNELGEVRLSMGTTLIRNKMENLCILLLILRIAYISLTFIEDKIEDYSPYITKEMLEQYPIQSEVIFLAQQILASENWCACANENTISCLLYIWCAFVFSPTEGDFLLEQPSDVIINLVILIGTSIGLHRDPSDFPALNHPEASDKRLLNLRRIQWLSIISMATLESSLKGRLLVSPLSMIDLFIDVRDPNCVEIYKKRVKKDLTGSESDEQLLEIHEIFFHRAQLALFLSDLNNITISYSGSVPMDTLETLRVKANELLKNKFQLRSVDINIYDEEKTFQKLTFNSILNSISLSGQILGKLMMLRASIALMLYFETLAMERSECLSFFYKYFFQCCADTISLIRFFFLYFNGSYEKVLSSLVCFITTKVIQLAVPTTMFTLLVIIMRVELAKNMLLVKCNECNARGDISDLPEIKEKIKSLDTIKENFERLLLEVYLLASQNLRFKYFYIFKMLTLFDVFIQRLRKGQLFSGLFVKVDKDLTTKKIATMLELTLGINLDKSDHLIDRLKGKNLTVNFTLDQLYQIIKEFDRIKNIGVADPQNSLNPSKPNMKDNTPTIELLLNSSVENESVPPYSSSNDPTNVGNASTYSLAHNISNQNNEENMPPSIGSSESNRAAPNLNFMPINNNYNNSGSNINNNDNVKLPSNFKNYYDPPMSSLDISMDVPDIFGSLDFFDYDLLFQND</sequence>
<proteinExistence type="evidence at protein level"/>
<protein>
    <recommendedName>
        <fullName>Peroxisome proliferation transcriptional regulator</fullName>
    </recommendedName>
    <alternativeName>
        <fullName>Oleate-activated transcription factor 2</fullName>
    </alternativeName>
</protein>